<comment type="function">
    <text evidence="1">Catalyzes the ATP-dependent conversion of 7-carboxy-7-deazaguanine (CDG) to 7-cyano-7-deazaguanine (preQ(0)).</text>
</comment>
<comment type="catalytic activity">
    <reaction evidence="1">
        <text>7-carboxy-7-deazaguanine + NH4(+) + ATP = 7-cyano-7-deazaguanine + ADP + phosphate + H2O + H(+)</text>
        <dbReference type="Rhea" id="RHEA:27982"/>
        <dbReference type="ChEBI" id="CHEBI:15377"/>
        <dbReference type="ChEBI" id="CHEBI:15378"/>
        <dbReference type="ChEBI" id="CHEBI:28938"/>
        <dbReference type="ChEBI" id="CHEBI:30616"/>
        <dbReference type="ChEBI" id="CHEBI:43474"/>
        <dbReference type="ChEBI" id="CHEBI:45075"/>
        <dbReference type="ChEBI" id="CHEBI:61036"/>
        <dbReference type="ChEBI" id="CHEBI:456216"/>
        <dbReference type="EC" id="6.3.4.20"/>
    </reaction>
</comment>
<comment type="cofactor">
    <cofactor evidence="1">
        <name>Zn(2+)</name>
        <dbReference type="ChEBI" id="CHEBI:29105"/>
    </cofactor>
    <text evidence="1">Binds 1 zinc ion per subunit.</text>
</comment>
<comment type="pathway">
    <text evidence="1">Purine metabolism; 7-cyano-7-deazaguanine biosynthesis.</text>
</comment>
<comment type="similarity">
    <text evidence="1">Belongs to the QueC family.</text>
</comment>
<accession>Q04PP1</accession>
<sequence length="242" mass="26774">MNSRKDKNSKGKNSDTKRKKSSQENDKAVVLLSGGLDSTTCLYQALADGKKIQALSFDYGQKHKIELSYAKKITRQLGISHTIQKLKPELFLGSSLTQKSLRVPKNSLGKEEIPNTYVPGRNILFLSFAVCLAEGTGSNSIYIGVNAMDYSGYPDCRPEFIKTYETAIQLGTKKGNQGSPIKIVTPLQNLSKKEIVLLGNRLQVPFHLTFSCYDPKNRKACGKCDACLLRKKGFQETGVSEK</sequence>
<reference key="1">
    <citation type="journal article" date="2006" name="Proc. Natl. Acad. Sci. U.S.A.">
        <title>Genome reduction in Leptospira borgpetersenii reflects limited transmission potential.</title>
        <authorList>
            <person name="Bulach D.M."/>
            <person name="Zuerner R.L."/>
            <person name="Wilson P."/>
            <person name="Seemann T."/>
            <person name="McGrath A."/>
            <person name="Cullen P.A."/>
            <person name="Davis J."/>
            <person name="Johnson M."/>
            <person name="Kuczek E."/>
            <person name="Alt D.P."/>
            <person name="Peterson-Burch B."/>
            <person name="Coppel R.L."/>
            <person name="Rood J.I."/>
            <person name="Davies J.K."/>
            <person name="Adler B."/>
        </authorList>
    </citation>
    <scope>NUCLEOTIDE SEQUENCE [LARGE SCALE GENOMIC DNA]</scope>
    <source>
        <strain>JB197</strain>
    </source>
</reference>
<organism>
    <name type="scientific">Leptospira borgpetersenii serovar Hardjo-bovis (strain JB197)</name>
    <dbReference type="NCBI Taxonomy" id="355277"/>
    <lineage>
        <taxon>Bacteria</taxon>
        <taxon>Pseudomonadati</taxon>
        <taxon>Spirochaetota</taxon>
        <taxon>Spirochaetia</taxon>
        <taxon>Leptospirales</taxon>
        <taxon>Leptospiraceae</taxon>
        <taxon>Leptospira</taxon>
    </lineage>
</organism>
<evidence type="ECO:0000255" key="1">
    <source>
        <dbReference type="HAMAP-Rule" id="MF_01633"/>
    </source>
</evidence>
<evidence type="ECO:0000256" key="2">
    <source>
        <dbReference type="SAM" id="MobiDB-lite"/>
    </source>
</evidence>
<proteinExistence type="inferred from homology"/>
<name>QUEC_LEPBJ</name>
<dbReference type="EC" id="6.3.4.20" evidence="1"/>
<dbReference type="EMBL" id="CP000350">
    <property type="protein sequence ID" value="ABJ77129.1"/>
    <property type="molecule type" value="Genomic_DNA"/>
</dbReference>
<dbReference type="RefSeq" id="WP_002740442.1">
    <property type="nucleotide sequence ID" value="NC_008510.1"/>
</dbReference>
<dbReference type="SMR" id="Q04PP1"/>
<dbReference type="KEGG" id="lbj:LBJ_2716"/>
<dbReference type="HOGENOM" id="CLU_081854_1_0_12"/>
<dbReference type="UniPathway" id="UPA00391"/>
<dbReference type="Proteomes" id="UP000000656">
    <property type="component" value="Chromosome 1"/>
</dbReference>
<dbReference type="GO" id="GO:0005524">
    <property type="term" value="F:ATP binding"/>
    <property type="evidence" value="ECO:0007669"/>
    <property type="project" value="UniProtKB-UniRule"/>
</dbReference>
<dbReference type="GO" id="GO:0016879">
    <property type="term" value="F:ligase activity, forming carbon-nitrogen bonds"/>
    <property type="evidence" value="ECO:0007669"/>
    <property type="project" value="UniProtKB-UniRule"/>
</dbReference>
<dbReference type="GO" id="GO:0008270">
    <property type="term" value="F:zinc ion binding"/>
    <property type="evidence" value="ECO:0007669"/>
    <property type="project" value="UniProtKB-UniRule"/>
</dbReference>
<dbReference type="GO" id="GO:0008616">
    <property type="term" value="P:queuosine biosynthetic process"/>
    <property type="evidence" value="ECO:0007669"/>
    <property type="project" value="UniProtKB-UniRule"/>
</dbReference>
<dbReference type="CDD" id="cd01995">
    <property type="entry name" value="QueC-like"/>
    <property type="match status" value="1"/>
</dbReference>
<dbReference type="FunFam" id="3.40.50.620:FF:000170">
    <property type="entry name" value="7-cyano-7-deazaguanine synthase"/>
    <property type="match status" value="1"/>
</dbReference>
<dbReference type="Gene3D" id="3.40.50.620">
    <property type="entry name" value="HUPs"/>
    <property type="match status" value="1"/>
</dbReference>
<dbReference type="HAMAP" id="MF_01633">
    <property type="entry name" value="QueC"/>
    <property type="match status" value="1"/>
</dbReference>
<dbReference type="InterPro" id="IPR018317">
    <property type="entry name" value="QueC"/>
</dbReference>
<dbReference type="InterPro" id="IPR014729">
    <property type="entry name" value="Rossmann-like_a/b/a_fold"/>
</dbReference>
<dbReference type="NCBIfam" id="TIGR00364">
    <property type="entry name" value="7-cyano-7-deazaguanine synthase QueC"/>
    <property type="match status" value="1"/>
</dbReference>
<dbReference type="PANTHER" id="PTHR42914">
    <property type="entry name" value="7-CYANO-7-DEAZAGUANINE SYNTHASE"/>
    <property type="match status" value="1"/>
</dbReference>
<dbReference type="PANTHER" id="PTHR42914:SF1">
    <property type="entry name" value="7-CYANO-7-DEAZAGUANINE SYNTHASE"/>
    <property type="match status" value="1"/>
</dbReference>
<dbReference type="Pfam" id="PF06508">
    <property type="entry name" value="QueC"/>
    <property type="match status" value="1"/>
</dbReference>
<dbReference type="PIRSF" id="PIRSF006293">
    <property type="entry name" value="ExsB"/>
    <property type="match status" value="1"/>
</dbReference>
<dbReference type="SUPFAM" id="SSF52402">
    <property type="entry name" value="Adenine nucleotide alpha hydrolases-like"/>
    <property type="match status" value="1"/>
</dbReference>
<feature type="chain" id="PRO_1000069775" description="7-cyano-7-deazaguanine synthase">
    <location>
        <begin position="1"/>
        <end position="242"/>
    </location>
</feature>
<feature type="region of interest" description="Disordered" evidence="2">
    <location>
        <begin position="1"/>
        <end position="25"/>
    </location>
</feature>
<feature type="binding site" evidence="1">
    <location>
        <begin position="32"/>
        <end position="42"/>
    </location>
    <ligand>
        <name>ATP</name>
        <dbReference type="ChEBI" id="CHEBI:30616"/>
    </ligand>
</feature>
<feature type="binding site" evidence="1">
    <location>
        <position position="212"/>
    </location>
    <ligand>
        <name>Zn(2+)</name>
        <dbReference type="ChEBI" id="CHEBI:29105"/>
    </ligand>
</feature>
<feature type="binding site" evidence="1">
    <location>
        <position position="221"/>
    </location>
    <ligand>
        <name>Zn(2+)</name>
        <dbReference type="ChEBI" id="CHEBI:29105"/>
    </ligand>
</feature>
<feature type="binding site" evidence="1">
    <location>
        <position position="224"/>
    </location>
    <ligand>
        <name>Zn(2+)</name>
        <dbReference type="ChEBI" id="CHEBI:29105"/>
    </ligand>
</feature>
<feature type="binding site" evidence="1">
    <location>
        <position position="227"/>
    </location>
    <ligand>
        <name>Zn(2+)</name>
        <dbReference type="ChEBI" id="CHEBI:29105"/>
    </ligand>
</feature>
<gene>
    <name evidence="1" type="primary">queC</name>
    <name type="ordered locus">LBJ_2716</name>
</gene>
<protein>
    <recommendedName>
        <fullName evidence="1">7-cyano-7-deazaguanine synthase</fullName>
        <ecNumber evidence="1">6.3.4.20</ecNumber>
    </recommendedName>
    <alternativeName>
        <fullName evidence="1">7-cyano-7-carbaguanine synthase</fullName>
    </alternativeName>
    <alternativeName>
        <fullName evidence="1">PreQ(0) synthase</fullName>
    </alternativeName>
    <alternativeName>
        <fullName evidence="1">Queuosine biosynthesis protein QueC</fullName>
    </alternativeName>
</protein>
<keyword id="KW-0067">ATP-binding</keyword>
<keyword id="KW-0436">Ligase</keyword>
<keyword id="KW-0479">Metal-binding</keyword>
<keyword id="KW-0547">Nucleotide-binding</keyword>
<keyword id="KW-0671">Queuosine biosynthesis</keyword>
<keyword id="KW-0862">Zinc</keyword>